<name>YFMT_THETH</name>
<comment type="function">
    <text evidence="1">Displays ATPase and GTPase activities.</text>
</comment>
<comment type="similarity">
    <text evidence="3">Belongs to the RapZ-like family.</text>
</comment>
<evidence type="ECO:0000250" key="1"/>
<evidence type="ECO:0000255" key="2"/>
<evidence type="ECO:0000305" key="3"/>
<feature type="chain" id="PRO_0000107779" description="Nucleotide-binding protein in fmt 3'region">
    <location>
        <begin position="1"/>
        <end position="110" status="greater than"/>
    </location>
</feature>
<feature type="binding site" evidence="2">
    <location>
        <begin position="8"/>
        <end position="15"/>
    </location>
    <ligand>
        <name>ATP</name>
        <dbReference type="ChEBI" id="CHEBI:30616"/>
    </ligand>
</feature>
<feature type="binding site" evidence="2">
    <location>
        <begin position="57"/>
        <end position="60"/>
    </location>
    <ligand>
        <name>GTP</name>
        <dbReference type="ChEBI" id="CHEBI:37565"/>
    </ligand>
</feature>
<feature type="non-terminal residue">
    <location>
        <position position="110"/>
    </location>
</feature>
<sequence>MRFLVLTGLSGAGKTTARGFLEDLGYFMVDNLPPRLWPPLLQEAAARGLARVGVVVDARALAFFQDLEEVLEALRPTVVYLEARPEVLLRRYNLTRRVHPLGAGNLMREI</sequence>
<protein>
    <recommendedName>
        <fullName>Nucleotide-binding protein in fmt 3'region</fullName>
    </recommendedName>
</protein>
<organism>
    <name type="scientific">Thermus thermophilus</name>
    <dbReference type="NCBI Taxonomy" id="274"/>
    <lineage>
        <taxon>Bacteria</taxon>
        <taxon>Thermotogati</taxon>
        <taxon>Deinococcota</taxon>
        <taxon>Deinococci</taxon>
        <taxon>Thermales</taxon>
        <taxon>Thermaceae</taxon>
        <taxon>Thermus</taxon>
    </lineage>
</organism>
<reference key="1">
    <citation type="journal article" date="1994" name="J. Bacteriol.">
        <title>Characterization of the Thermus thermophilus locus encoding peptide deformylase and methionyl-tRNA(fMet) formyltransferase.</title>
        <authorList>
            <person name="Meinnel T."/>
            <person name="Blanquet S."/>
        </authorList>
    </citation>
    <scope>NUCLEOTIDE SEQUENCE [GENOMIC DNA]</scope>
    <source>
        <strain>VK1</strain>
    </source>
</reference>
<dbReference type="EMBL" id="X79087">
    <property type="protein sequence ID" value="CAA55697.1"/>
    <property type="molecule type" value="Genomic_DNA"/>
</dbReference>
<dbReference type="SMR" id="P43520"/>
<dbReference type="GO" id="GO:0005524">
    <property type="term" value="F:ATP binding"/>
    <property type="evidence" value="ECO:0007669"/>
    <property type="project" value="UniProtKB-KW"/>
</dbReference>
<dbReference type="GO" id="GO:0005525">
    <property type="term" value="F:GTP binding"/>
    <property type="evidence" value="ECO:0007669"/>
    <property type="project" value="UniProtKB-KW"/>
</dbReference>
<dbReference type="InterPro" id="IPR027417">
    <property type="entry name" value="P-loop_NTPase"/>
</dbReference>
<dbReference type="InterPro" id="IPR005337">
    <property type="entry name" value="RapZ-like"/>
</dbReference>
<dbReference type="InterPro" id="IPR053930">
    <property type="entry name" value="RapZ-like_N"/>
</dbReference>
<dbReference type="PANTHER" id="PTHR30448">
    <property type="entry name" value="RNASE ADAPTER PROTEIN RAPZ"/>
    <property type="match status" value="1"/>
</dbReference>
<dbReference type="PANTHER" id="PTHR30448:SF0">
    <property type="entry name" value="RNASE ADAPTER PROTEIN RAPZ"/>
    <property type="match status" value="1"/>
</dbReference>
<dbReference type="Pfam" id="PF03668">
    <property type="entry name" value="RapZ-like_N"/>
    <property type="match status" value="1"/>
</dbReference>
<dbReference type="SUPFAM" id="SSF52540">
    <property type="entry name" value="P-loop containing nucleoside triphosphate hydrolases"/>
    <property type="match status" value="1"/>
</dbReference>
<proteinExistence type="inferred from homology"/>
<accession>P43520</accession>
<keyword id="KW-0067">ATP-binding</keyword>
<keyword id="KW-0342">GTP-binding</keyword>
<keyword id="KW-0547">Nucleotide-binding</keyword>